<sequence length="758" mass="80163">MAAPTPSNRIEERSGHASCVRADADLPPVAILGRSPITLRHKIFFVAVAVIGALAWTVVAFFRNEPVNAVWIVVAAGCTYIIGFRFYARLIEMKVVRPRDDHATPAEILDDGTDYVPTDRRVVFGHHFAAIAGAGPLVGPVLATQMGYLPSSIWIVVGAVLAGCVQDYLVLWISVRRRGRSLGQMVRDELGATAGVAALVGIPVIITIVIAVLALVVVRALAKSPWGVFSIAMTIPIAIFMGCYLRFLRPGRVSEVSLIGIGLLLLAVVSGDWVAHTSWGAAWFSLSPVTLCWLLISYGFAASVLPVWLLLAPRDYLSTFMKVGTIALLAIGVCAAHPIIEAPAVSKFAGSGNGPVFAGSLFPFLFITIACGALSGFHALICSGTTPKMLEKEGQMRVIGYGGMMTESFVAVIALLTAAILDQHLYFTLNAPSLHTHDSAATAAKYVNGLGLTGSPVTPDHISQAAASVGEQTIVSRTGGAPTLAFGMAEMLHRVVGGVGLKAFWYHFAIMFEALFILTTVDAGTRAARFMISDALGNFGGVLRKLQNPSWRPGAWACRLVVVAAWGSILLLGVTDPLGGINTLFPLFGIANQLLAGIALTVITVVVIKKGRLKWAWIPGIPLLWDLAVTLTASWQKIFSADPSVGYWTQHAHYAAAQHAGETAFGSATNADEINDVVRNTFVQGTLSIVFVVVVVLVVVAGVIVALKTIRGRGIPLAEDDPAPSTLFAPAGLIPTAAERKLQRRLGAPASASVAAPD</sequence>
<name>CSTA_MYCTU</name>
<proteinExistence type="inferred from homology"/>
<comment type="function">
    <text evidence="1">Involved in peptide utilization.</text>
</comment>
<comment type="subcellular location">
    <subcellularLocation>
        <location evidence="3">Cell membrane</location>
        <topology evidence="2">Multi-pass membrane protein</topology>
    </subcellularLocation>
</comment>
<comment type="similarity">
    <text evidence="3">Belongs to the peptide transporter carbon starvation (CstA) (TC 2.A.114) family.</text>
</comment>
<accession>P9WP47</accession>
<accession>L0TBQ3</accession>
<accession>P95095</accession>
<reference key="1">
    <citation type="journal article" date="1998" name="Nature">
        <title>Deciphering the biology of Mycobacterium tuberculosis from the complete genome sequence.</title>
        <authorList>
            <person name="Cole S.T."/>
            <person name="Brosch R."/>
            <person name="Parkhill J."/>
            <person name="Garnier T."/>
            <person name="Churcher C.M."/>
            <person name="Harris D.E."/>
            <person name="Gordon S.V."/>
            <person name="Eiglmeier K."/>
            <person name="Gas S."/>
            <person name="Barry C.E. III"/>
            <person name="Tekaia F."/>
            <person name="Badcock K."/>
            <person name="Basham D."/>
            <person name="Brown D."/>
            <person name="Chillingworth T."/>
            <person name="Connor R."/>
            <person name="Davies R.M."/>
            <person name="Devlin K."/>
            <person name="Feltwell T."/>
            <person name="Gentles S."/>
            <person name="Hamlin N."/>
            <person name="Holroyd S."/>
            <person name="Hornsby T."/>
            <person name="Jagels K."/>
            <person name="Krogh A."/>
            <person name="McLean J."/>
            <person name="Moule S."/>
            <person name="Murphy L.D."/>
            <person name="Oliver S."/>
            <person name="Osborne J."/>
            <person name="Quail M.A."/>
            <person name="Rajandream M.A."/>
            <person name="Rogers J."/>
            <person name="Rutter S."/>
            <person name="Seeger K."/>
            <person name="Skelton S."/>
            <person name="Squares S."/>
            <person name="Squares R."/>
            <person name="Sulston J.E."/>
            <person name="Taylor K."/>
            <person name="Whitehead S."/>
            <person name="Barrell B.G."/>
        </authorList>
    </citation>
    <scope>NUCLEOTIDE SEQUENCE [LARGE SCALE GENOMIC DNA]</scope>
    <source>
        <strain>ATCC 25618 / H37Rv</strain>
    </source>
</reference>
<keyword id="KW-1003">Cell membrane</keyword>
<keyword id="KW-0472">Membrane</keyword>
<keyword id="KW-0571">Peptide transport</keyword>
<keyword id="KW-0653">Protein transport</keyword>
<keyword id="KW-1185">Reference proteome</keyword>
<keyword id="KW-0812">Transmembrane</keyword>
<keyword id="KW-1133">Transmembrane helix</keyword>
<keyword id="KW-0813">Transport</keyword>
<dbReference type="EMBL" id="AL123456">
    <property type="protein sequence ID" value="CCP45872.1"/>
    <property type="molecule type" value="Genomic_DNA"/>
</dbReference>
<dbReference type="PIR" id="H70649">
    <property type="entry name" value="H70649"/>
</dbReference>
<dbReference type="RefSeq" id="NP_217579.1">
    <property type="nucleotide sequence ID" value="NC_000962.3"/>
</dbReference>
<dbReference type="RefSeq" id="WP_003917116.1">
    <property type="nucleotide sequence ID" value="NZ_NVQJ01000011.1"/>
</dbReference>
<dbReference type="FunCoup" id="P9WP47">
    <property type="interactions" value="4"/>
</dbReference>
<dbReference type="STRING" id="83332.Rv3063"/>
<dbReference type="PaxDb" id="83332-Rv3063"/>
<dbReference type="GeneID" id="887948"/>
<dbReference type="KEGG" id="mtu:Rv3063"/>
<dbReference type="KEGG" id="mtv:RVBD_3063"/>
<dbReference type="TubercuList" id="Rv3063"/>
<dbReference type="eggNOG" id="COG1966">
    <property type="taxonomic scope" value="Bacteria"/>
</dbReference>
<dbReference type="InParanoid" id="P9WP47"/>
<dbReference type="OrthoDB" id="9761224at2"/>
<dbReference type="PhylomeDB" id="P9WP47"/>
<dbReference type="Proteomes" id="UP000001584">
    <property type="component" value="Chromosome"/>
</dbReference>
<dbReference type="GO" id="GO:0005886">
    <property type="term" value="C:plasma membrane"/>
    <property type="evidence" value="ECO:0000318"/>
    <property type="project" value="GO_Central"/>
</dbReference>
<dbReference type="GO" id="GO:0031669">
    <property type="term" value="P:cellular response to nutrient levels"/>
    <property type="evidence" value="ECO:0000318"/>
    <property type="project" value="GO_Central"/>
</dbReference>
<dbReference type="GO" id="GO:0009267">
    <property type="term" value="P:cellular response to starvation"/>
    <property type="evidence" value="ECO:0007669"/>
    <property type="project" value="InterPro"/>
</dbReference>
<dbReference type="GO" id="GO:0015833">
    <property type="term" value="P:peptide transport"/>
    <property type="evidence" value="ECO:0007669"/>
    <property type="project" value="UniProtKB-KW"/>
</dbReference>
<dbReference type="GO" id="GO:0015031">
    <property type="term" value="P:protein transport"/>
    <property type="evidence" value="ECO:0007669"/>
    <property type="project" value="UniProtKB-KW"/>
</dbReference>
<dbReference type="InterPro" id="IPR051605">
    <property type="entry name" value="CstA"/>
</dbReference>
<dbReference type="InterPro" id="IPR003706">
    <property type="entry name" value="CstA_N"/>
</dbReference>
<dbReference type="PANTHER" id="PTHR30252">
    <property type="entry name" value="INNER MEMBRANE PEPTIDE TRANSPORTER"/>
    <property type="match status" value="1"/>
</dbReference>
<dbReference type="PANTHER" id="PTHR30252:SF3">
    <property type="entry name" value="PYRUVATE_PROTON SYMPORTER BTST"/>
    <property type="match status" value="1"/>
</dbReference>
<dbReference type="Pfam" id="PF02554">
    <property type="entry name" value="CstA"/>
    <property type="match status" value="1"/>
</dbReference>
<feature type="chain" id="PRO_0000190049" description="Peptide transporter CstA">
    <location>
        <begin position="1"/>
        <end position="758"/>
    </location>
</feature>
<feature type="transmembrane region" description="Helical" evidence="2">
    <location>
        <begin position="42"/>
        <end position="62"/>
    </location>
</feature>
<feature type="transmembrane region" description="Helical" evidence="2">
    <location>
        <begin position="67"/>
        <end position="87"/>
    </location>
</feature>
<feature type="transmembrane region" description="Helical" evidence="2">
    <location>
        <begin position="122"/>
        <end position="142"/>
    </location>
</feature>
<feature type="transmembrane region" description="Helical" evidence="2">
    <location>
        <begin position="153"/>
        <end position="173"/>
    </location>
</feature>
<feature type="transmembrane region" description="Helical" evidence="2">
    <location>
        <begin position="198"/>
        <end position="218"/>
    </location>
</feature>
<feature type="transmembrane region" description="Helical" evidence="2">
    <location>
        <begin position="225"/>
        <end position="245"/>
    </location>
</feature>
<feature type="transmembrane region" description="Helical" evidence="2">
    <location>
        <begin position="256"/>
        <end position="276"/>
    </location>
</feature>
<feature type="transmembrane region" description="Helical" evidence="2">
    <location>
        <begin position="291"/>
        <end position="311"/>
    </location>
</feature>
<feature type="transmembrane region" description="Helical" evidence="2">
    <location>
        <begin position="320"/>
        <end position="340"/>
    </location>
</feature>
<feature type="transmembrane region" description="Helical" evidence="2">
    <location>
        <begin position="361"/>
        <end position="381"/>
    </location>
</feature>
<feature type="transmembrane region" description="Helical" evidence="2">
    <location>
        <begin position="401"/>
        <end position="421"/>
    </location>
</feature>
<feature type="transmembrane region" description="Helical" evidence="2">
    <location>
        <begin position="498"/>
        <end position="518"/>
    </location>
</feature>
<feature type="transmembrane region" description="Helical" evidence="2">
    <location>
        <begin position="561"/>
        <end position="581"/>
    </location>
</feature>
<feature type="transmembrane region" description="Helical" evidence="2">
    <location>
        <begin position="588"/>
        <end position="608"/>
    </location>
</feature>
<feature type="transmembrane region" description="Helical" evidence="2">
    <location>
        <begin position="615"/>
        <end position="635"/>
    </location>
</feature>
<feature type="transmembrane region" description="Helical" evidence="2">
    <location>
        <begin position="687"/>
        <end position="707"/>
    </location>
</feature>
<organism>
    <name type="scientific">Mycobacterium tuberculosis (strain ATCC 25618 / H37Rv)</name>
    <dbReference type="NCBI Taxonomy" id="83332"/>
    <lineage>
        <taxon>Bacteria</taxon>
        <taxon>Bacillati</taxon>
        <taxon>Actinomycetota</taxon>
        <taxon>Actinomycetes</taxon>
        <taxon>Mycobacteriales</taxon>
        <taxon>Mycobacteriaceae</taxon>
        <taxon>Mycobacterium</taxon>
        <taxon>Mycobacterium tuberculosis complex</taxon>
    </lineage>
</organism>
<protein>
    <recommendedName>
        <fullName evidence="3">Peptide transporter CstA</fullName>
    </recommendedName>
    <alternativeName>
        <fullName evidence="3">Carbon starvation protein A homolog</fullName>
    </alternativeName>
</protein>
<gene>
    <name type="primary">cstA</name>
    <name type="ordered locus">Rv3063</name>
    <name type="ORF">MTCY22D7.18c</name>
</gene>
<evidence type="ECO:0000250" key="1">
    <source>
        <dbReference type="UniProtKB" id="P15078"/>
    </source>
</evidence>
<evidence type="ECO:0000255" key="2"/>
<evidence type="ECO:0000305" key="3"/>